<proteinExistence type="inferred from homology"/>
<accession>B3PK42</accession>
<dbReference type="EMBL" id="CP000934">
    <property type="protein sequence ID" value="ACE85454.1"/>
    <property type="molecule type" value="Genomic_DNA"/>
</dbReference>
<dbReference type="RefSeq" id="WP_012486367.1">
    <property type="nucleotide sequence ID" value="NC_010995.1"/>
</dbReference>
<dbReference type="SMR" id="B3PK42"/>
<dbReference type="STRING" id="498211.CJA_0704"/>
<dbReference type="KEGG" id="cja:CJA_0704"/>
<dbReference type="eggNOG" id="COG0091">
    <property type="taxonomic scope" value="Bacteria"/>
</dbReference>
<dbReference type="HOGENOM" id="CLU_083987_3_3_6"/>
<dbReference type="OrthoDB" id="9805969at2"/>
<dbReference type="Proteomes" id="UP000001036">
    <property type="component" value="Chromosome"/>
</dbReference>
<dbReference type="GO" id="GO:0022625">
    <property type="term" value="C:cytosolic large ribosomal subunit"/>
    <property type="evidence" value="ECO:0007669"/>
    <property type="project" value="TreeGrafter"/>
</dbReference>
<dbReference type="GO" id="GO:0019843">
    <property type="term" value="F:rRNA binding"/>
    <property type="evidence" value="ECO:0007669"/>
    <property type="project" value="UniProtKB-UniRule"/>
</dbReference>
<dbReference type="GO" id="GO:0003735">
    <property type="term" value="F:structural constituent of ribosome"/>
    <property type="evidence" value="ECO:0007669"/>
    <property type="project" value="InterPro"/>
</dbReference>
<dbReference type="GO" id="GO:0006412">
    <property type="term" value="P:translation"/>
    <property type="evidence" value="ECO:0007669"/>
    <property type="project" value="UniProtKB-UniRule"/>
</dbReference>
<dbReference type="CDD" id="cd00336">
    <property type="entry name" value="Ribosomal_L22"/>
    <property type="match status" value="1"/>
</dbReference>
<dbReference type="FunFam" id="3.90.470.10:FF:000001">
    <property type="entry name" value="50S ribosomal protein L22"/>
    <property type="match status" value="1"/>
</dbReference>
<dbReference type="Gene3D" id="3.90.470.10">
    <property type="entry name" value="Ribosomal protein L22/L17"/>
    <property type="match status" value="1"/>
</dbReference>
<dbReference type="HAMAP" id="MF_01331_B">
    <property type="entry name" value="Ribosomal_uL22_B"/>
    <property type="match status" value="1"/>
</dbReference>
<dbReference type="InterPro" id="IPR001063">
    <property type="entry name" value="Ribosomal_uL22"/>
</dbReference>
<dbReference type="InterPro" id="IPR005727">
    <property type="entry name" value="Ribosomal_uL22_bac/chlpt-type"/>
</dbReference>
<dbReference type="InterPro" id="IPR047867">
    <property type="entry name" value="Ribosomal_uL22_bac/org-type"/>
</dbReference>
<dbReference type="InterPro" id="IPR018260">
    <property type="entry name" value="Ribosomal_uL22_CS"/>
</dbReference>
<dbReference type="InterPro" id="IPR036394">
    <property type="entry name" value="Ribosomal_uL22_sf"/>
</dbReference>
<dbReference type="NCBIfam" id="TIGR01044">
    <property type="entry name" value="rplV_bact"/>
    <property type="match status" value="1"/>
</dbReference>
<dbReference type="PANTHER" id="PTHR13501">
    <property type="entry name" value="CHLOROPLAST 50S RIBOSOMAL PROTEIN L22-RELATED"/>
    <property type="match status" value="1"/>
</dbReference>
<dbReference type="PANTHER" id="PTHR13501:SF8">
    <property type="entry name" value="LARGE RIBOSOMAL SUBUNIT PROTEIN UL22M"/>
    <property type="match status" value="1"/>
</dbReference>
<dbReference type="Pfam" id="PF00237">
    <property type="entry name" value="Ribosomal_L22"/>
    <property type="match status" value="1"/>
</dbReference>
<dbReference type="SUPFAM" id="SSF54843">
    <property type="entry name" value="Ribosomal protein L22"/>
    <property type="match status" value="1"/>
</dbReference>
<dbReference type="PROSITE" id="PS00464">
    <property type="entry name" value="RIBOSOMAL_L22"/>
    <property type="match status" value="1"/>
</dbReference>
<reference key="1">
    <citation type="journal article" date="2008" name="J. Bacteriol.">
        <title>Insights into plant cell wall degradation from the genome sequence of the soil bacterium Cellvibrio japonicus.</title>
        <authorList>
            <person name="DeBoy R.T."/>
            <person name="Mongodin E.F."/>
            <person name="Fouts D.E."/>
            <person name="Tailford L.E."/>
            <person name="Khouri H."/>
            <person name="Emerson J.B."/>
            <person name="Mohamoud Y."/>
            <person name="Watkins K."/>
            <person name="Henrissat B."/>
            <person name="Gilbert H.J."/>
            <person name="Nelson K.E."/>
        </authorList>
    </citation>
    <scope>NUCLEOTIDE SEQUENCE [LARGE SCALE GENOMIC DNA]</scope>
    <source>
        <strain>Ueda107</strain>
    </source>
</reference>
<sequence>MEVAAKLSGARLSAQKARLVADQIRGKGVEDALDILAFSTKKGAQIIKKVLESAIANAEHNEGADVDELKVKTIFVDEGVSLKRIKPRAKGRADRITKRTCHITVKVADK</sequence>
<evidence type="ECO:0000255" key="1">
    <source>
        <dbReference type="HAMAP-Rule" id="MF_01331"/>
    </source>
</evidence>
<evidence type="ECO:0000305" key="2"/>
<protein>
    <recommendedName>
        <fullName evidence="1">Large ribosomal subunit protein uL22</fullName>
    </recommendedName>
    <alternativeName>
        <fullName evidence="2">50S ribosomal protein L22</fullName>
    </alternativeName>
</protein>
<name>RL22_CELJU</name>
<keyword id="KW-1185">Reference proteome</keyword>
<keyword id="KW-0687">Ribonucleoprotein</keyword>
<keyword id="KW-0689">Ribosomal protein</keyword>
<keyword id="KW-0694">RNA-binding</keyword>
<keyword id="KW-0699">rRNA-binding</keyword>
<gene>
    <name evidence="1" type="primary">rplV</name>
    <name type="ordered locus">CJA_0704</name>
</gene>
<comment type="function">
    <text evidence="1">This protein binds specifically to 23S rRNA; its binding is stimulated by other ribosomal proteins, e.g. L4, L17, and L20. It is important during the early stages of 50S assembly. It makes multiple contacts with different domains of the 23S rRNA in the assembled 50S subunit and ribosome (By similarity).</text>
</comment>
<comment type="function">
    <text evidence="1">The globular domain of the protein is located near the polypeptide exit tunnel on the outside of the subunit, while an extended beta-hairpin is found that lines the wall of the exit tunnel in the center of the 70S ribosome.</text>
</comment>
<comment type="subunit">
    <text evidence="1">Part of the 50S ribosomal subunit.</text>
</comment>
<comment type="similarity">
    <text evidence="1">Belongs to the universal ribosomal protein uL22 family.</text>
</comment>
<organism>
    <name type="scientific">Cellvibrio japonicus (strain Ueda107)</name>
    <name type="common">Pseudomonas fluorescens subsp. cellulosa</name>
    <dbReference type="NCBI Taxonomy" id="498211"/>
    <lineage>
        <taxon>Bacteria</taxon>
        <taxon>Pseudomonadati</taxon>
        <taxon>Pseudomonadota</taxon>
        <taxon>Gammaproteobacteria</taxon>
        <taxon>Cellvibrionales</taxon>
        <taxon>Cellvibrionaceae</taxon>
        <taxon>Cellvibrio</taxon>
    </lineage>
</organism>
<feature type="chain" id="PRO_1000142243" description="Large ribosomal subunit protein uL22">
    <location>
        <begin position="1"/>
        <end position="110"/>
    </location>
</feature>